<sequence>MNSRHVGQDSTTRDWYRDPKTIAWISDAVMEKTLGVARRPIRVSDKVILNVLDSFLQNNRPAIGHGCGVTNNPSYVTCDKYCPSLAPIETNPVVVRVVEFISQYIRDEYSFQEAGKQWSAWPSDRIQKHSQIKVRDRRPIPFQFNMNF</sequence>
<protein>
    <recommendedName>
        <fullName>Uncharacterized protein 001R</fullName>
    </recommendedName>
</protein>
<gene>
    <name type="ORF">IIV3-001R</name>
</gene>
<evidence type="ECO:0000305" key="1"/>
<feature type="chain" id="PRO_0000377793" description="Uncharacterized protein 001R">
    <location>
        <begin position="1"/>
        <end position="148"/>
    </location>
</feature>
<dbReference type="EMBL" id="DQ643392">
    <property type="protein sequence ID" value="ABF82031.1"/>
    <property type="molecule type" value="Genomic_DNA"/>
</dbReference>
<dbReference type="RefSeq" id="YP_654573.1">
    <property type="nucleotide sequence ID" value="NC_008187.1"/>
</dbReference>
<dbReference type="KEGG" id="vg:4156250"/>
<dbReference type="OrthoDB" id="28337at10239"/>
<dbReference type="Proteomes" id="UP000001358">
    <property type="component" value="Genome"/>
</dbReference>
<comment type="similarity">
    <text evidence="1">Belongs to the IIV-6 395R family.</text>
</comment>
<organismHost>
    <name type="scientific">Aedes vexans</name>
    <name type="common">Inland floodwater mosquito</name>
    <name type="synonym">Culex vexans</name>
    <dbReference type="NCBI Taxonomy" id="7163"/>
</organismHost>
<organismHost>
    <name type="scientific">Culex territans</name>
    <dbReference type="NCBI Taxonomy" id="42431"/>
</organismHost>
<organismHost>
    <name type="scientific">Culiseta annulata</name>
    <dbReference type="NCBI Taxonomy" id="332058"/>
</organismHost>
<organismHost>
    <name type="scientific">Ochlerotatus sollicitans</name>
    <name type="common">eastern saltmarsh mosquito</name>
    <dbReference type="NCBI Taxonomy" id="310513"/>
</organismHost>
<organismHost>
    <name type="scientific">Ochlerotatus taeniorhynchus</name>
    <name type="common">Black salt marsh mosquito</name>
    <name type="synonym">Aedes taeniorhynchus</name>
    <dbReference type="NCBI Taxonomy" id="329105"/>
</organismHost>
<organismHost>
    <name type="scientific">Psorophora ferox</name>
    <dbReference type="NCBI Taxonomy" id="7183"/>
</organismHost>
<name>VF395_IIV3</name>
<organism>
    <name type="scientific">Invertebrate iridescent virus 3</name>
    <name type="common">IIV-3</name>
    <name type="synonym">Mosquito iridescent virus</name>
    <dbReference type="NCBI Taxonomy" id="345201"/>
    <lineage>
        <taxon>Viruses</taxon>
        <taxon>Varidnaviria</taxon>
        <taxon>Bamfordvirae</taxon>
        <taxon>Nucleocytoviricota</taxon>
        <taxon>Megaviricetes</taxon>
        <taxon>Pimascovirales</taxon>
        <taxon>Iridoviridae</taxon>
        <taxon>Betairidovirinae</taxon>
        <taxon>Chloriridovirus</taxon>
    </lineage>
</organism>
<proteinExistence type="inferred from homology"/>
<accession>Q197F9</accession>
<reference key="1">
    <citation type="journal article" date="2006" name="J. Virol.">
        <title>Genome of invertebrate iridescent virus type 3 (mosquito iridescent virus).</title>
        <authorList>
            <person name="Delhon G."/>
            <person name="Tulman E.R."/>
            <person name="Afonso C.L."/>
            <person name="Lu Z."/>
            <person name="Becnel J.J."/>
            <person name="Moser B.A."/>
            <person name="Kutish G.F."/>
            <person name="Rock D.L."/>
        </authorList>
    </citation>
    <scope>NUCLEOTIDE SEQUENCE [LARGE SCALE GENOMIC DNA]</scope>
</reference>
<keyword id="KW-1185">Reference proteome</keyword>